<dbReference type="EC" id="1.4.4.2" evidence="8 9 10"/>
<dbReference type="EMBL" id="M63635">
    <property type="protein sequence ID" value="AAA36478.1"/>
    <property type="molecule type" value="mRNA"/>
</dbReference>
<dbReference type="EMBL" id="M64590">
    <property type="protein sequence ID" value="AAA36463.1"/>
    <property type="molecule type" value="mRNA"/>
</dbReference>
<dbReference type="EMBL" id="D90239">
    <property type="protein sequence ID" value="BAA14286.1"/>
    <property type="molecule type" value="mRNA"/>
</dbReference>
<dbReference type="EMBL" id="AK314156">
    <property type="protein sequence ID" value="BAG36841.1"/>
    <property type="molecule type" value="mRNA"/>
</dbReference>
<dbReference type="EMBL" id="AL353718">
    <property type="status" value="NOT_ANNOTATED_CDS"/>
    <property type="molecule type" value="Genomic_DNA"/>
</dbReference>
<dbReference type="EMBL" id="AL162411">
    <property type="status" value="NOT_ANNOTATED_CDS"/>
    <property type="molecule type" value="Genomic_DNA"/>
</dbReference>
<dbReference type="EMBL" id="CH471071">
    <property type="protein sequence ID" value="EAW58740.1"/>
    <property type="molecule type" value="Genomic_DNA"/>
</dbReference>
<dbReference type="EMBL" id="BC111993">
    <property type="protein sequence ID" value="AAI11994.1"/>
    <property type="molecule type" value="mRNA"/>
</dbReference>
<dbReference type="EMBL" id="BC111995">
    <property type="protein sequence ID" value="AAI11996.1"/>
    <property type="molecule type" value="mRNA"/>
</dbReference>
<dbReference type="CCDS" id="CCDS34987.1"/>
<dbReference type="PIR" id="JN0124">
    <property type="entry name" value="JN0124"/>
</dbReference>
<dbReference type="RefSeq" id="NP_000161.2">
    <property type="nucleotide sequence ID" value="NM_000170.3"/>
</dbReference>
<dbReference type="PDB" id="6I33">
    <property type="method" value="X-ray"/>
    <property type="resolution" value="2.30 A"/>
    <property type="chains" value="A/B=45-1020"/>
</dbReference>
<dbReference type="PDB" id="6I34">
    <property type="method" value="X-ray"/>
    <property type="resolution" value="2.10 A"/>
    <property type="chains" value="A/B/C/D=45-1020"/>
</dbReference>
<dbReference type="PDB" id="6I35">
    <property type="method" value="X-ray"/>
    <property type="resolution" value="2.00 A"/>
    <property type="chains" value="A/B/C/D=45-1020"/>
</dbReference>
<dbReference type="PDBsum" id="6I33"/>
<dbReference type="PDBsum" id="6I34"/>
<dbReference type="PDBsum" id="6I35"/>
<dbReference type="SASBDB" id="P23378"/>
<dbReference type="SMR" id="P23378"/>
<dbReference type="BioGRID" id="108993">
    <property type="interactions" value="310"/>
</dbReference>
<dbReference type="FunCoup" id="P23378">
    <property type="interactions" value="820"/>
</dbReference>
<dbReference type="IntAct" id="P23378">
    <property type="interactions" value="27"/>
</dbReference>
<dbReference type="MINT" id="P23378"/>
<dbReference type="STRING" id="9606.ENSP00000370737"/>
<dbReference type="DrugBank" id="DB00145">
    <property type="generic name" value="Glycine"/>
</dbReference>
<dbReference type="DrugBank" id="DB00114">
    <property type="generic name" value="Pyridoxal phosphate"/>
</dbReference>
<dbReference type="iPTMnet" id="P23378"/>
<dbReference type="PhosphoSitePlus" id="P23378"/>
<dbReference type="SwissPalm" id="P23378"/>
<dbReference type="BioMuta" id="GLDC"/>
<dbReference type="DMDM" id="229462870"/>
<dbReference type="jPOST" id="P23378"/>
<dbReference type="MassIVE" id="P23378"/>
<dbReference type="PaxDb" id="9606-ENSP00000370737"/>
<dbReference type="PeptideAtlas" id="P23378"/>
<dbReference type="ProteomicsDB" id="54084"/>
<dbReference type="Pumba" id="P23378"/>
<dbReference type="Antibodypedia" id="9715">
    <property type="antibodies" value="198 antibodies from 31 providers"/>
</dbReference>
<dbReference type="DNASU" id="2731"/>
<dbReference type="Ensembl" id="ENST00000321612.8">
    <property type="protein sequence ID" value="ENSP00000370737.4"/>
    <property type="gene ID" value="ENSG00000178445.10"/>
</dbReference>
<dbReference type="GeneID" id="2731"/>
<dbReference type="KEGG" id="hsa:2731"/>
<dbReference type="MANE-Select" id="ENST00000321612.8">
    <property type="protein sequence ID" value="ENSP00000370737.4"/>
    <property type="RefSeq nucleotide sequence ID" value="NM_000170.3"/>
    <property type="RefSeq protein sequence ID" value="NP_000161.2"/>
</dbReference>
<dbReference type="UCSC" id="uc003zkc.4">
    <property type="organism name" value="human"/>
</dbReference>
<dbReference type="AGR" id="HGNC:4313"/>
<dbReference type="CTD" id="2731"/>
<dbReference type="DisGeNET" id="2731"/>
<dbReference type="GeneCards" id="GLDC"/>
<dbReference type="GeneReviews" id="GLDC"/>
<dbReference type="HGNC" id="HGNC:4313">
    <property type="gene designation" value="GLDC"/>
</dbReference>
<dbReference type="HPA" id="ENSG00000178445">
    <property type="expression patterns" value="Tissue enriched (liver)"/>
</dbReference>
<dbReference type="MalaCards" id="GLDC"/>
<dbReference type="MIM" id="238300">
    <property type="type" value="gene"/>
</dbReference>
<dbReference type="MIM" id="605899">
    <property type="type" value="phenotype"/>
</dbReference>
<dbReference type="neXtProt" id="NX_P23378"/>
<dbReference type="OpenTargets" id="ENSG00000178445"/>
<dbReference type="Orphanet" id="289863">
    <property type="disease" value="Atypical glycine encephalopathy"/>
</dbReference>
<dbReference type="Orphanet" id="289860">
    <property type="disease" value="Infantile glycine encephalopathy"/>
</dbReference>
<dbReference type="Orphanet" id="289857">
    <property type="disease" value="Neonatal glycine encephalopathy"/>
</dbReference>
<dbReference type="PharmGKB" id="PA28716"/>
<dbReference type="VEuPathDB" id="HostDB:ENSG00000178445"/>
<dbReference type="eggNOG" id="KOG2040">
    <property type="taxonomic scope" value="Eukaryota"/>
</dbReference>
<dbReference type="GeneTree" id="ENSGT00390000017970"/>
<dbReference type="HOGENOM" id="CLU_004620_3_2_1"/>
<dbReference type="InParanoid" id="P23378"/>
<dbReference type="OMA" id="RNLICTC"/>
<dbReference type="OrthoDB" id="6537869at2759"/>
<dbReference type="PAN-GO" id="P23378">
    <property type="GO annotations" value="6 GO annotations based on evolutionary models"/>
</dbReference>
<dbReference type="PhylomeDB" id="P23378"/>
<dbReference type="TreeFam" id="TF300678"/>
<dbReference type="BioCyc" id="MetaCyc:HS00622-MONOMER"/>
<dbReference type="BRENDA" id="1.4.1.27">
    <property type="organism ID" value="2681"/>
</dbReference>
<dbReference type="BRENDA" id="1.4.4.2">
    <property type="organism ID" value="2681"/>
</dbReference>
<dbReference type="PathwayCommons" id="P23378"/>
<dbReference type="Reactome" id="R-HSA-6783984">
    <property type="pathway name" value="Glycine degradation"/>
</dbReference>
<dbReference type="SABIO-RK" id="P23378"/>
<dbReference type="SignaLink" id="P23378"/>
<dbReference type="SIGNOR" id="P23378"/>
<dbReference type="BioGRID-ORCS" id="2731">
    <property type="hits" value="11 hits in 1153 CRISPR screens"/>
</dbReference>
<dbReference type="ChiTaRS" id="GLDC">
    <property type="organism name" value="human"/>
</dbReference>
<dbReference type="GeneWiki" id="Glycine_dehydrogenase_(decarboxylating)"/>
<dbReference type="GenomeRNAi" id="2731"/>
<dbReference type="Pharos" id="P23378">
    <property type="development level" value="Tbio"/>
</dbReference>
<dbReference type="PRO" id="PR:P23378"/>
<dbReference type="Proteomes" id="UP000005640">
    <property type="component" value="Chromosome 9"/>
</dbReference>
<dbReference type="RNAct" id="P23378">
    <property type="molecule type" value="protein"/>
</dbReference>
<dbReference type="Bgee" id="ENSG00000178445">
    <property type="expression patterns" value="Expressed in right lobe of liver and 151 other cell types or tissues"/>
</dbReference>
<dbReference type="ExpressionAtlas" id="P23378">
    <property type="expression patterns" value="baseline and differential"/>
</dbReference>
<dbReference type="GO" id="GO:0005960">
    <property type="term" value="C:glycine cleavage complex"/>
    <property type="evidence" value="ECO:0000318"/>
    <property type="project" value="GO_Central"/>
</dbReference>
<dbReference type="GO" id="GO:0005759">
    <property type="term" value="C:mitochondrial matrix"/>
    <property type="evidence" value="ECO:0000304"/>
    <property type="project" value="Reactome"/>
</dbReference>
<dbReference type="GO" id="GO:0005739">
    <property type="term" value="C:mitochondrion"/>
    <property type="evidence" value="ECO:0000314"/>
    <property type="project" value="UniProtKB"/>
</dbReference>
<dbReference type="GO" id="GO:0005654">
    <property type="term" value="C:nucleoplasm"/>
    <property type="evidence" value="ECO:0000314"/>
    <property type="project" value="HPA"/>
</dbReference>
<dbReference type="GO" id="GO:0005886">
    <property type="term" value="C:plasma membrane"/>
    <property type="evidence" value="ECO:0000314"/>
    <property type="project" value="HPA"/>
</dbReference>
<dbReference type="GO" id="GO:0009055">
    <property type="term" value="F:electron transfer activity"/>
    <property type="evidence" value="ECO:0000304"/>
    <property type="project" value="UniProtKB"/>
</dbReference>
<dbReference type="GO" id="GO:0016594">
    <property type="term" value="F:glycine binding"/>
    <property type="evidence" value="ECO:0000318"/>
    <property type="project" value="GO_Central"/>
</dbReference>
<dbReference type="GO" id="GO:0004375">
    <property type="term" value="F:glycine dehydrogenase (decarboxylating) activity"/>
    <property type="evidence" value="ECO:0000314"/>
    <property type="project" value="UniProtKB"/>
</dbReference>
<dbReference type="GO" id="GO:0016829">
    <property type="term" value="F:lyase activity"/>
    <property type="evidence" value="ECO:0007669"/>
    <property type="project" value="InterPro"/>
</dbReference>
<dbReference type="GO" id="GO:0042803">
    <property type="term" value="F:protein homodimerization activity"/>
    <property type="evidence" value="ECO:0000250"/>
    <property type="project" value="UniProtKB"/>
</dbReference>
<dbReference type="GO" id="GO:0070280">
    <property type="term" value="F:pyridoxal binding"/>
    <property type="evidence" value="ECO:0000250"/>
    <property type="project" value="UniProtKB"/>
</dbReference>
<dbReference type="GO" id="GO:0030170">
    <property type="term" value="F:pyridoxal phosphate binding"/>
    <property type="evidence" value="ECO:0000318"/>
    <property type="project" value="GO_Central"/>
</dbReference>
<dbReference type="GO" id="GO:1990830">
    <property type="term" value="P:cellular response to leukemia inhibitory factor"/>
    <property type="evidence" value="ECO:0007669"/>
    <property type="project" value="Ensembl"/>
</dbReference>
<dbReference type="GO" id="GO:0006546">
    <property type="term" value="P:glycine catabolic process"/>
    <property type="evidence" value="ECO:0000314"/>
    <property type="project" value="UniProtKB"/>
</dbReference>
<dbReference type="GO" id="GO:0019464">
    <property type="term" value="P:glycine decarboxylation via glycine cleavage system"/>
    <property type="evidence" value="ECO:0000318"/>
    <property type="project" value="GO_Central"/>
</dbReference>
<dbReference type="GO" id="GO:1903442">
    <property type="term" value="P:response to lipoic acid"/>
    <property type="evidence" value="ECO:0000250"/>
    <property type="project" value="UniProtKB"/>
</dbReference>
<dbReference type="GO" id="GO:0036255">
    <property type="term" value="P:response to methylamine"/>
    <property type="evidence" value="ECO:0000250"/>
    <property type="project" value="UniProtKB"/>
</dbReference>
<dbReference type="CDD" id="cd00613">
    <property type="entry name" value="GDC-P"/>
    <property type="match status" value="2"/>
</dbReference>
<dbReference type="FunFam" id="3.90.1150.10:FF:000025">
    <property type="entry name" value="Glycine cleavage system P protein"/>
    <property type="match status" value="1"/>
</dbReference>
<dbReference type="FunFam" id="3.90.1150.10:FF:000153">
    <property type="entry name" value="Glycine dehydrogenase (decarboxylating)"/>
    <property type="match status" value="1"/>
</dbReference>
<dbReference type="FunFam" id="3.40.640.10:FF:000007">
    <property type="entry name" value="glycine dehydrogenase (Decarboxylating), mitochondrial"/>
    <property type="match status" value="1"/>
</dbReference>
<dbReference type="FunFam" id="3.40.640.10:FF:000199">
    <property type="entry name" value="Glycine dehydrogenase [decarboxylating], mitochondrial"/>
    <property type="match status" value="1"/>
</dbReference>
<dbReference type="FunFam" id="3.40.640.10:FF:000225">
    <property type="entry name" value="Glycine dehydrogenase [decarboxylating], mitochondrial"/>
    <property type="match status" value="1"/>
</dbReference>
<dbReference type="Gene3D" id="3.90.1150.10">
    <property type="entry name" value="Aspartate Aminotransferase, domain 1"/>
    <property type="match status" value="2"/>
</dbReference>
<dbReference type="Gene3D" id="3.40.640.10">
    <property type="entry name" value="Type I PLP-dependent aspartate aminotransferase-like (Major domain)"/>
    <property type="match status" value="2"/>
</dbReference>
<dbReference type="HAMAP" id="MF_00711">
    <property type="entry name" value="GcvP"/>
    <property type="match status" value="1"/>
</dbReference>
<dbReference type="InterPro" id="IPR001597">
    <property type="entry name" value="ArAA_b-elim_lyase/Thr_aldolase"/>
</dbReference>
<dbReference type="InterPro" id="IPR003437">
    <property type="entry name" value="GcvP"/>
</dbReference>
<dbReference type="InterPro" id="IPR049316">
    <property type="entry name" value="GDC-P_C"/>
</dbReference>
<dbReference type="InterPro" id="IPR049315">
    <property type="entry name" value="GDC-P_N"/>
</dbReference>
<dbReference type="InterPro" id="IPR020581">
    <property type="entry name" value="GDC_P"/>
</dbReference>
<dbReference type="InterPro" id="IPR015424">
    <property type="entry name" value="PyrdxlP-dep_Trfase"/>
</dbReference>
<dbReference type="InterPro" id="IPR015421">
    <property type="entry name" value="PyrdxlP-dep_Trfase_major"/>
</dbReference>
<dbReference type="InterPro" id="IPR015422">
    <property type="entry name" value="PyrdxlP-dep_Trfase_small"/>
</dbReference>
<dbReference type="NCBIfam" id="TIGR00461">
    <property type="entry name" value="gcvP"/>
    <property type="match status" value="1"/>
</dbReference>
<dbReference type="NCBIfam" id="NF003346">
    <property type="entry name" value="PRK04366.1"/>
    <property type="match status" value="1"/>
</dbReference>
<dbReference type="PANTHER" id="PTHR11773:SF1">
    <property type="entry name" value="GLYCINE DEHYDROGENASE (DECARBOXYLATING), MITOCHONDRIAL"/>
    <property type="match status" value="1"/>
</dbReference>
<dbReference type="PANTHER" id="PTHR11773">
    <property type="entry name" value="GLYCINE DEHYDROGENASE, DECARBOXYLATING"/>
    <property type="match status" value="1"/>
</dbReference>
<dbReference type="Pfam" id="PF01212">
    <property type="entry name" value="Beta_elim_lyase"/>
    <property type="match status" value="1"/>
</dbReference>
<dbReference type="Pfam" id="PF21478">
    <property type="entry name" value="GcvP2_C"/>
    <property type="match status" value="1"/>
</dbReference>
<dbReference type="Pfam" id="PF02347">
    <property type="entry name" value="GDC-P"/>
    <property type="match status" value="1"/>
</dbReference>
<dbReference type="SUPFAM" id="SSF53383">
    <property type="entry name" value="PLP-dependent transferases"/>
    <property type="match status" value="2"/>
</dbReference>
<name>GCSP_HUMAN</name>
<protein>
    <recommendedName>
        <fullName evidence="12">Glycine dehydrogenase (decarboxylating), mitochondrial</fullName>
        <ecNumber evidence="8 9 10">1.4.4.2</ecNumber>
    </recommendedName>
    <alternativeName>
        <fullName>Glycine cleavage system P protein</fullName>
    </alternativeName>
    <alternativeName>
        <fullName evidence="13 14">Glycine decarboxylase</fullName>
    </alternativeName>
    <alternativeName>
        <fullName>Glycine dehydrogenase (aminomethyl-transferring)</fullName>
    </alternativeName>
</protein>
<reference key="1">
    <citation type="journal article" date="1991" name="Biochem. Biophys. Res. Commun.">
        <title>Structural and expression analyses of normal and mutant mRNA encoding glycine decarboxylase: three-base deletion in mRNA causes nonketotic hyperglycinemia.</title>
        <authorList>
            <person name="Kure S."/>
            <person name="Narisawa K."/>
            <person name="Tada K."/>
        </authorList>
    </citation>
    <scope>NUCLEOTIDE SEQUENCE [MRNA]</scope>
    <scope>CATALYTIC ACTIVITY</scope>
    <scope>VARIANT NKH PHE-756 DEL</scope>
</reference>
<reference key="2">
    <citation type="journal article" date="1991" name="J. Biol. Chem.">
        <title>The glycine cleavage system. Molecular cloning of the chicken and human glycine decarboxylase cDNAs and some characteristics involved in the deduced protein structures.</title>
        <authorList>
            <person name="Kume A."/>
            <person name="Koyata H."/>
            <person name="Sakakibara T."/>
            <person name="Ishiguro Y."/>
            <person name="Kure S."/>
            <person name="Hiraga K."/>
        </authorList>
    </citation>
    <scope>NUCLEOTIDE SEQUENCE [MRNA]</scope>
    <scope>CATALYTIC ACTIVITY</scope>
</reference>
<reference key="3">
    <citation type="journal article" date="2004" name="Nat. Genet.">
        <title>Complete sequencing and characterization of 21,243 full-length human cDNAs.</title>
        <authorList>
            <person name="Ota T."/>
            <person name="Suzuki Y."/>
            <person name="Nishikawa T."/>
            <person name="Otsuki T."/>
            <person name="Sugiyama T."/>
            <person name="Irie R."/>
            <person name="Wakamatsu A."/>
            <person name="Hayashi K."/>
            <person name="Sato H."/>
            <person name="Nagai K."/>
            <person name="Kimura K."/>
            <person name="Makita H."/>
            <person name="Sekine M."/>
            <person name="Obayashi M."/>
            <person name="Nishi T."/>
            <person name="Shibahara T."/>
            <person name="Tanaka T."/>
            <person name="Ishii S."/>
            <person name="Yamamoto J."/>
            <person name="Saito K."/>
            <person name="Kawai Y."/>
            <person name="Isono Y."/>
            <person name="Nakamura Y."/>
            <person name="Nagahari K."/>
            <person name="Murakami K."/>
            <person name="Yasuda T."/>
            <person name="Iwayanagi T."/>
            <person name="Wagatsuma M."/>
            <person name="Shiratori A."/>
            <person name="Sudo H."/>
            <person name="Hosoiri T."/>
            <person name="Kaku Y."/>
            <person name="Kodaira H."/>
            <person name="Kondo H."/>
            <person name="Sugawara M."/>
            <person name="Takahashi M."/>
            <person name="Kanda K."/>
            <person name="Yokoi T."/>
            <person name="Furuya T."/>
            <person name="Kikkawa E."/>
            <person name="Omura Y."/>
            <person name="Abe K."/>
            <person name="Kamihara K."/>
            <person name="Katsuta N."/>
            <person name="Sato K."/>
            <person name="Tanikawa M."/>
            <person name="Yamazaki M."/>
            <person name="Ninomiya K."/>
            <person name="Ishibashi T."/>
            <person name="Yamashita H."/>
            <person name="Murakawa K."/>
            <person name="Fujimori K."/>
            <person name="Tanai H."/>
            <person name="Kimata M."/>
            <person name="Watanabe M."/>
            <person name="Hiraoka S."/>
            <person name="Chiba Y."/>
            <person name="Ishida S."/>
            <person name="Ono Y."/>
            <person name="Takiguchi S."/>
            <person name="Watanabe S."/>
            <person name="Yosida M."/>
            <person name="Hotuta T."/>
            <person name="Kusano J."/>
            <person name="Kanehori K."/>
            <person name="Takahashi-Fujii A."/>
            <person name="Hara H."/>
            <person name="Tanase T.-O."/>
            <person name="Nomura Y."/>
            <person name="Togiya S."/>
            <person name="Komai F."/>
            <person name="Hara R."/>
            <person name="Takeuchi K."/>
            <person name="Arita M."/>
            <person name="Imose N."/>
            <person name="Musashino K."/>
            <person name="Yuuki H."/>
            <person name="Oshima A."/>
            <person name="Sasaki N."/>
            <person name="Aotsuka S."/>
            <person name="Yoshikawa Y."/>
            <person name="Matsunawa H."/>
            <person name="Ichihara T."/>
            <person name="Shiohata N."/>
            <person name="Sano S."/>
            <person name="Moriya S."/>
            <person name="Momiyama H."/>
            <person name="Satoh N."/>
            <person name="Takami S."/>
            <person name="Terashima Y."/>
            <person name="Suzuki O."/>
            <person name="Nakagawa S."/>
            <person name="Senoh A."/>
            <person name="Mizoguchi H."/>
            <person name="Goto Y."/>
            <person name="Shimizu F."/>
            <person name="Wakebe H."/>
            <person name="Hishigaki H."/>
            <person name="Watanabe T."/>
            <person name="Sugiyama A."/>
            <person name="Takemoto M."/>
            <person name="Kawakami B."/>
            <person name="Yamazaki M."/>
            <person name="Watanabe K."/>
            <person name="Kumagai A."/>
            <person name="Itakura S."/>
            <person name="Fukuzumi Y."/>
            <person name="Fujimori Y."/>
            <person name="Komiyama M."/>
            <person name="Tashiro H."/>
            <person name="Tanigami A."/>
            <person name="Fujiwara T."/>
            <person name="Ono T."/>
            <person name="Yamada K."/>
            <person name="Fujii Y."/>
            <person name="Ozaki K."/>
            <person name="Hirao M."/>
            <person name="Ohmori Y."/>
            <person name="Kawabata A."/>
            <person name="Hikiji T."/>
            <person name="Kobatake N."/>
            <person name="Inagaki H."/>
            <person name="Ikema Y."/>
            <person name="Okamoto S."/>
            <person name="Okitani R."/>
            <person name="Kawakami T."/>
            <person name="Noguchi S."/>
            <person name="Itoh T."/>
            <person name="Shigeta K."/>
            <person name="Senba T."/>
            <person name="Matsumura K."/>
            <person name="Nakajima Y."/>
            <person name="Mizuno T."/>
            <person name="Morinaga M."/>
            <person name="Sasaki M."/>
            <person name="Togashi T."/>
            <person name="Oyama M."/>
            <person name="Hata H."/>
            <person name="Watanabe M."/>
            <person name="Komatsu T."/>
            <person name="Mizushima-Sugano J."/>
            <person name="Satoh T."/>
            <person name="Shirai Y."/>
            <person name="Takahashi Y."/>
            <person name="Nakagawa K."/>
            <person name="Okumura K."/>
            <person name="Nagase T."/>
            <person name="Nomura N."/>
            <person name="Kikuchi H."/>
            <person name="Masuho Y."/>
            <person name="Yamashita R."/>
            <person name="Nakai K."/>
            <person name="Yada T."/>
            <person name="Nakamura Y."/>
            <person name="Ohara O."/>
            <person name="Isogai T."/>
            <person name="Sugano S."/>
        </authorList>
    </citation>
    <scope>NUCLEOTIDE SEQUENCE [LARGE SCALE MRNA]</scope>
</reference>
<reference key="4">
    <citation type="journal article" date="2004" name="Nature">
        <title>DNA sequence and analysis of human chromosome 9.</title>
        <authorList>
            <person name="Humphray S.J."/>
            <person name="Oliver K."/>
            <person name="Hunt A.R."/>
            <person name="Plumb R.W."/>
            <person name="Loveland J.E."/>
            <person name="Howe K.L."/>
            <person name="Andrews T.D."/>
            <person name="Searle S."/>
            <person name="Hunt S.E."/>
            <person name="Scott C.E."/>
            <person name="Jones M.C."/>
            <person name="Ainscough R."/>
            <person name="Almeida J.P."/>
            <person name="Ambrose K.D."/>
            <person name="Ashwell R.I.S."/>
            <person name="Babbage A.K."/>
            <person name="Babbage S."/>
            <person name="Bagguley C.L."/>
            <person name="Bailey J."/>
            <person name="Banerjee R."/>
            <person name="Barker D.J."/>
            <person name="Barlow K.F."/>
            <person name="Bates K."/>
            <person name="Beasley H."/>
            <person name="Beasley O."/>
            <person name="Bird C.P."/>
            <person name="Bray-Allen S."/>
            <person name="Brown A.J."/>
            <person name="Brown J.Y."/>
            <person name="Burford D."/>
            <person name="Burrill W."/>
            <person name="Burton J."/>
            <person name="Carder C."/>
            <person name="Carter N.P."/>
            <person name="Chapman J.C."/>
            <person name="Chen Y."/>
            <person name="Clarke G."/>
            <person name="Clark S.Y."/>
            <person name="Clee C.M."/>
            <person name="Clegg S."/>
            <person name="Collier R.E."/>
            <person name="Corby N."/>
            <person name="Crosier M."/>
            <person name="Cummings A.T."/>
            <person name="Davies J."/>
            <person name="Dhami P."/>
            <person name="Dunn M."/>
            <person name="Dutta I."/>
            <person name="Dyer L.W."/>
            <person name="Earthrowl M.E."/>
            <person name="Faulkner L."/>
            <person name="Fleming C.J."/>
            <person name="Frankish A."/>
            <person name="Frankland J.A."/>
            <person name="French L."/>
            <person name="Fricker D.G."/>
            <person name="Garner P."/>
            <person name="Garnett J."/>
            <person name="Ghori J."/>
            <person name="Gilbert J.G.R."/>
            <person name="Glison C."/>
            <person name="Grafham D.V."/>
            <person name="Gribble S."/>
            <person name="Griffiths C."/>
            <person name="Griffiths-Jones S."/>
            <person name="Grocock R."/>
            <person name="Guy J."/>
            <person name="Hall R.E."/>
            <person name="Hammond S."/>
            <person name="Harley J.L."/>
            <person name="Harrison E.S.I."/>
            <person name="Hart E.A."/>
            <person name="Heath P.D."/>
            <person name="Henderson C.D."/>
            <person name="Hopkins B.L."/>
            <person name="Howard P.J."/>
            <person name="Howden P.J."/>
            <person name="Huckle E."/>
            <person name="Johnson C."/>
            <person name="Johnson D."/>
            <person name="Joy A.A."/>
            <person name="Kay M."/>
            <person name="Keenan S."/>
            <person name="Kershaw J.K."/>
            <person name="Kimberley A.M."/>
            <person name="King A."/>
            <person name="Knights A."/>
            <person name="Laird G.K."/>
            <person name="Langford C."/>
            <person name="Lawlor S."/>
            <person name="Leongamornlert D.A."/>
            <person name="Leversha M."/>
            <person name="Lloyd C."/>
            <person name="Lloyd D.M."/>
            <person name="Lovell J."/>
            <person name="Martin S."/>
            <person name="Mashreghi-Mohammadi M."/>
            <person name="Matthews L."/>
            <person name="McLaren S."/>
            <person name="McLay K.E."/>
            <person name="McMurray A."/>
            <person name="Milne S."/>
            <person name="Nickerson T."/>
            <person name="Nisbett J."/>
            <person name="Nordsiek G."/>
            <person name="Pearce A.V."/>
            <person name="Peck A.I."/>
            <person name="Porter K.M."/>
            <person name="Pandian R."/>
            <person name="Pelan S."/>
            <person name="Phillimore B."/>
            <person name="Povey S."/>
            <person name="Ramsey Y."/>
            <person name="Rand V."/>
            <person name="Scharfe M."/>
            <person name="Sehra H.K."/>
            <person name="Shownkeen R."/>
            <person name="Sims S.K."/>
            <person name="Skuce C.D."/>
            <person name="Smith M."/>
            <person name="Steward C.A."/>
            <person name="Swarbreck D."/>
            <person name="Sycamore N."/>
            <person name="Tester J."/>
            <person name="Thorpe A."/>
            <person name="Tracey A."/>
            <person name="Tromans A."/>
            <person name="Thomas D.W."/>
            <person name="Wall M."/>
            <person name="Wallis J.M."/>
            <person name="West A.P."/>
            <person name="Whitehead S.L."/>
            <person name="Willey D.L."/>
            <person name="Williams S.A."/>
            <person name="Wilming L."/>
            <person name="Wray P.W."/>
            <person name="Young L."/>
            <person name="Ashurst J.L."/>
            <person name="Coulson A."/>
            <person name="Blocker H."/>
            <person name="Durbin R.M."/>
            <person name="Sulston J.E."/>
            <person name="Hubbard T."/>
            <person name="Jackson M.J."/>
            <person name="Bentley D.R."/>
            <person name="Beck S."/>
            <person name="Rogers J."/>
            <person name="Dunham I."/>
        </authorList>
    </citation>
    <scope>NUCLEOTIDE SEQUENCE [LARGE SCALE GENOMIC DNA]</scope>
</reference>
<reference key="5">
    <citation type="submission" date="2005-09" db="EMBL/GenBank/DDBJ databases">
        <authorList>
            <person name="Mural R.J."/>
            <person name="Istrail S."/>
            <person name="Sutton G.G."/>
            <person name="Florea L."/>
            <person name="Halpern A.L."/>
            <person name="Mobarry C.M."/>
            <person name="Lippert R."/>
            <person name="Walenz B."/>
            <person name="Shatkay H."/>
            <person name="Dew I."/>
            <person name="Miller J.R."/>
            <person name="Flanigan M.J."/>
            <person name="Edwards N.J."/>
            <person name="Bolanos R."/>
            <person name="Fasulo D."/>
            <person name="Halldorsson B.V."/>
            <person name="Hannenhalli S."/>
            <person name="Turner R."/>
            <person name="Yooseph S."/>
            <person name="Lu F."/>
            <person name="Nusskern D.R."/>
            <person name="Shue B.C."/>
            <person name="Zheng X.H."/>
            <person name="Zhong F."/>
            <person name="Delcher A.L."/>
            <person name="Huson D.H."/>
            <person name="Kravitz S.A."/>
            <person name="Mouchard L."/>
            <person name="Reinert K."/>
            <person name="Remington K.A."/>
            <person name="Clark A.G."/>
            <person name="Waterman M.S."/>
            <person name="Eichler E.E."/>
            <person name="Adams M.D."/>
            <person name="Hunkapiller M.W."/>
            <person name="Myers E.W."/>
            <person name="Venter J.C."/>
        </authorList>
    </citation>
    <scope>NUCLEOTIDE SEQUENCE [LARGE SCALE GENOMIC DNA]</scope>
</reference>
<reference key="6">
    <citation type="journal article" date="2004" name="Genome Res.">
        <title>The status, quality, and expansion of the NIH full-length cDNA project: the Mammalian Gene Collection (MGC).</title>
        <authorList>
            <consortium name="The MGC Project Team"/>
        </authorList>
    </citation>
    <scope>NUCLEOTIDE SEQUENCE [LARGE SCALE MRNA]</scope>
    <source>
        <tissue>Brain</tissue>
    </source>
</reference>
<reference key="7">
    <citation type="journal article" date="2008" name="J. Proteome Res.">
        <title>Phosphoproteome of resting human platelets.</title>
        <authorList>
            <person name="Zahedi R.P."/>
            <person name="Lewandrowski U."/>
            <person name="Wiesner J."/>
            <person name="Wortelkamp S."/>
            <person name="Moebius J."/>
            <person name="Schuetz C."/>
            <person name="Walter U."/>
            <person name="Gambaryan S."/>
            <person name="Sickmann A."/>
        </authorList>
    </citation>
    <scope>IDENTIFICATION BY MASS SPECTROMETRY [LARGE SCALE ANALYSIS]</scope>
    <source>
        <tissue>Platelet</tissue>
    </source>
</reference>
<reference key="8">
    <citation type="journal article" date="2011" name="BMC Syst. Biol.">
        <title>Initial characterization of the human central proteome.</title>
        <authorList>
            <person name="Burkard T.R."/>
            <person name="Planyavsky M."/>
            <person name="Kaupe I."/>
            <person name="Breitwieser F.P."/>
            <person name="Buerckstuemmer T."/>
            <person name="Bennett K.L."/>
            <person name="Superti-Furga G."/>
            <person name="Colinge J."/>
        </authorList>
    </citation>
    <scope>IDENTIFICATION BY MASS SPECTROMETRY [LARGE SCALE ANALYSIS]</scope>
</reference>
<reference key="9">
    <citation type="journal article" date="2014" name="J. Proteomics">
        <title>An enzyme assisted RP-RPLC approach for in-depth analysis of human liver phosphoproteome.</title>
        <authorList>
            <person name="Bian Y."/>
            <person name="Song C."/>
            <person name="Cheng K."/>
            <person name="Dong M."/>
            <person name="Wang F."/>
            <person name="Huang J."/>
            <person name="Sun D."/>
            <person name="Wang L."/>
            <person name="Ye M."/>
            <person name="Zou H."/>
        </authorList>
    </citation>
    <scope>IDENTIFICATION BY MASS SPECTROMETRY [LARGE SCALE ANALYSIS]</scope>
    <source>
        <tissue>Liver</tissue>
    </source>
</reference>
<reference key="10">
    <citation type="journal article" date="2017" name="Hum. Mutat.">
        <title>Nonketotic Hyperglycinemia: functional assessment of missense variants in GLDC to understand phenotypes of the disease.</title>
        <authorList>
            <person name="Bravo-Alonso I."/>
            <person name="Navarrete R."/>
            <person name="Arribas-Carreira L."/>
            <person name="Perona A."/>
            <person name="Abia D."/>
            <person name="Couce M.L."/>
            <person name="Garcia-Cazorla A."/>
            <person name="Morais A."/>
            <person name="Domingo R."/>
            <person name="Ramos M.A."/>
            <person name="Swanson M.A."/>
            <person name="Van Hove J.L."/>
            <person name="Ugarte M."/>
            <person name="Perez B."/>
            <person name="Perez-Cerda C."/>
            <person name="Rodriguez-Pombo P."/>
        </authorList>
    </citation>
    <scope>FUNCTION</scope>
    <scope>SUBCELLULAR LOCATION</scope>
    <scope>CATALYTIC ACTIVITY</scope>
    <scope>INVOLVEMENT IN NKH</scope>
    <scope>VARIANTS NKH LYS-146; PRO-173; ALA-267; CYS-362; TRP-373; GLU-376; TRP-461; PRO-548; TYR-580; ARG-581; ASP-624; ASP-763; GLU-768; TRP-790; HIS-866; GLY-905; THR-933 AND ARG-994</scope>
    <scope>CHARACTERIZATION OF VARIANTS NKH LYS-146; PRO-173; ALA-267; CYS-362; TRP-373; GLU-376; TRP-461; PRO-548; TYR-580; ARG-581; ASP-624; ASP-763; GLU-768; TRP-790; HIS-866; GLY-905; THR-933 AND ARG-994</scope>
</reference>
<reference key="11">
    <citation type="journal article" date="1992" name="J. Clin. Invest.">
        <title>Identification of a common mutation in Finnish patients with nonketotic hyperglycinemia.</title>
        <authorList>
            <person name="Kure S."/>
            <person name="Takayanagi M."/>
            <person name="Narisawa K."/>
            <person name="Tada K."/>
            <person name="Leisti J."/>
        </authorList>
    </citation>
    <scope>VARIANT NKH ILE-564</scope>
</reference>
<reference key="12">
    <citation type="journal article" date="2001" name="Mol. Genet. Metab.">
        <title>Recurrent mutations in P- and T-proteins of the glycine cleavage complex and a novel T-protein mutation (N145I): a strategy for the molecular investigation of patients with nonketotic hyperglycinemia (NKH).</title>
        <authorList>
            <person name="Toone J.R."/>
            <person name="Applegarth D.A."/>
            <person name="Coulter-Mackie M.B."/>
            <person name="James E.R."/>
        </authorList>
    </citation>
    <scope>VARIANT NKH SER-515</scope>
</reference>
<reference key="13">
    <citation type="journal article" date="2001" name="Mol. Genet. Metab.">
        <title>Nonketotic hyperglycinemia (glycine encephalopathy): laboratory diagnosis.</title>
        <authorList>
            <person name="Applegarth D.A."/>
            <person name="Toone J.R."/>
        </authorList>
    </citation>
    <scope>VARIANT NKH PRO-283</scope>
    <scope>VARIANT THR-329</scope>
</reference>
<reference key="14">
    <citation type="journal article" date="2017" name="Arch. Argent. Pediatr.">
        <title>Two novel mutations in the glycine decarboxylase gene in a boy with classic nonketotic hyperglycinemia: case report.</title>
        <authorList>
            <person name="Liu S."/>
            <person name="Wang Z."/>
            <person name="Liang J."/>
            <person name="Chen N."/>
            <person name="Ouyang H."/>
            <person name="Zeng W."/>
            <person name="Chen L."/>
            <person name="Xie X."/>
            <person name="Jiang J."/>
        </authorList>
    </citation>
    <scope>VARIANT NKH CYS-839</scope>
</reference>
<evidence type="ECO:0000250" key="1">
    <source>
        <dbReference type="UniProtKB" id="P15505"/>
    </source>
</evidence>
<evidence type="ECO:0000250" key="2">
    <source>
        <dbReference type="UniProtKB" id="Q91W43"/>
    </source>
</evidence>
<evidence type="ECO:0000255" key="3"/>
<evidence type="ECO:0000256" key="4">
    <source>
        <dbReference type="SAM" id="MobiDB-lite"/>
    </source>
</evidence>
<evidence type="ECO:0000269" key="5">
    <source>
    </source>
</evidence>
<evidence type="ECO:0000269" key="6">
    <source>
    </source>
</evidence>
<evidence type="ECO:0000269" key="7">
    <source>
    </source>
</evidence>
<evidence type="ECO:0000269" key="8">
    <source>
    </source>
</evidence>
<evidence type="ECO:0000269" key="9">
    <source>
    </source>
</evidence>
<evidence type="ECO:0000269" key="10">
    <source>
    </source>
</evidence>
<evidence type="ECO:0000269" key="11">
    <source>
    </source>
</evidence>
<evidence type="ECO:0000303" key="12">
    <source>
    </source>
</evidence>
<evidence type="ECO:0000303" key="13">
    <source>
    </source>
</evidence>
<evidence type="ECO:0000303" key="14">
    <source>
    </source>
</evidence>
<evidence type="ECO:0000305" key="15"/>
<evidence type="ECO:0000312" key="16">
    <source>
        <dbReference type="HGNC" id="HGNC:4313"/>
    </source>
</evidence>
<evidence type="ECO:0007829" key="17">
    <source>
        <dbReference type="PDB" id="6I34"/>
    </source>
</evidence>
<evidence type="ECO:0007829" key="18">
    <source>
        <dbReference type="PDB" id="6I35"/>
    </source>
</evidence>
<accession>P23378</accession>
<accession>Q2M2F8</accession>
<comment type="function">
    <text evidence="8 9 10">The glycine cleavage system catalyzes the degradation of glycine. The P protein (GLDC) binds the alpha-amino group of glycine through its pyridoxal phosphate cofactor; CO(2) is released and the remaining methylamine moiety is then transferred to the lipoamide cofactor of the H protein (GCSH).</text>
</comment>
<comment type="catalytic activity">
    <reaction evidence="8 9 10">
        <text>N(6)-[(R)-lipoyl]-L-lysyl-[glycine-cleavage complex H protein] + glycine + H(+) = N(6)-[(R)-S(8)-aminomethyldihydrolipoyl]-L-lysyl-[glycine-cleavage complex H protein] + CO2</text>
        <dbReference type="Rhea" id="RHEA:24304"/>
        <dbReference type="Rhea" id="RHEA-COMP:10494"/>
        <dbReference type="Rhea" id="RHEA-COMP:10495"/>
        <dbReference type="ChEBI" id="CHEBI:15378"/>
        <dbReference type="ChEBI" id="CHEBI:16526"/>
        <dbReference type="ChEBI" id="CHEBI:57305"/>
        <dbReference type="ChEBI" id="CHEBI:83099"/>
        <dbReference type="ChEBI" id="CHEBI:83143"/>
        <dbReference type="EC" id="1.4.4.2"/>
    </reaction>
</comment>
<comment type="cofactor">
    <cofactor evidence="1">
        <name>pyridoxal 5'-phosphate</name>
        <dbReference type="ChEBI" id="CHEBI:597326"/>
    </cofactor>
</comment>
<comment type="activity regulation">
    <text evidence="1">Stimulated by lipoic acid. Inhibited in presence of methylamine (By similarity).</text>
</comment>
<comment type="subunit">
    <text evidence="1">Homodimer (By similarity). Interacts with GCSH (By similarity). The glycine cleavage system is composed of four proteins: P (GLDC), T (GCST), L (DLD) and H (GCSH).</text>
</comment>
<comment type="subcellular location">
    <subcellularLocation>
        <location evidence="10">Mitochondrion</location>
    </subcellularLocation>
</comment>
<comment type="disease" evidence="5 6 7 9 10 11">
    <disease id="DI-02061">
        <name>Non-ketotic hyperglycinemia</name>
        <acronym>NKH</acronym>
        <description>Autosomal recessive disease characterized by accumulation of a large amount of glycine in body fluid and by severe neurological symptoms.</description>
        <dbReference type="MIM" id="605899"/>
    </disease>
    <text>The disease is caused by variants affecting the gene represented in this entry.</text>
</comment>
<comment type="similarity">
    <text evidence="15">Belongs to the GcvP family.</text>
</comment>
<keyword id="KW-0002">3D-structure</keyword>
<keyword id="KW-0007">Acetylation</keyword>
<keyword id="KW-0225">Disease variant</keyword>
<keyword id="KW-0496">Mitochondrion</keyword>
<keyword id="KW-0560">Oxidoreductase</keyword>
<keyword id="KW-1267">Proteomics identification</keyword>
<keyword id="KW-0663">Pyridoxal phosphate</keyword>
<keyword id="KW-1185">Reference proteome</keyword>
<keyword id="KW-0809">Transit peptide</keyword>
<feature type="transit peptide" description="Mitochondrion" evidence="3">
    <location>
        <begin position="1"/>
        <end position="35"/>
    </location>
</feature>
<feature type="chain" id="PRO_0000010740" description="Glycine dehydrogenase (decarboxylating), mitochondrial">
    <location>
        <begin position="36"/>
        <end position="1020"/>
    </location>
</feature>
<feature type="region of interest" description="Disordered" evidence="4">
    <location>
        <begin position="21"/>
        <end position="46"/>
    </location>
</feature>
<feature type="modified residue" description="N6-acetyllysine" evidence="2">
    <location>
        <position position="447"/>
    </location>
</feature>
<feature type="modified residue" description="N6-acetyllysine" evidence="2">
    <location>
        <position position="514"/>
    </location>
</feature>
<feature type="modified residue" description="N6-acetyllysine" evidence="2">
    <location>
        <position position="648"/>
    </location>
</feature>
<feature type="modified residue" description="N6-acetyllysine" evidence="2">
    <location>
        <position position="664"/>
    </location>
</feature>
<feature type="modified residue" description="N6-(pyridoxal phosphate)lysine" evidence="1">
    <location>
        <position position="754"/>
    </location>
</feature>
<feature type="sequence variant" id="VAR_078776" description="In NKH; loss of glycine catabolic process; loss of expression; dbSNP:rs376578742." evidence="10">
    <original>T</original>
    <variation>K</variation>
    <location>
        <position position="146"/>
    </location>
</feature>
<feature type="sequence variant" id="VAR_078777" description="In NKH; loss of glycine catabolic process; decreased abundance." evidence="10">
    <original>L</original>
    <variation>P</variation>
    <location>
        <position position="173"/>
    </location>
</feature>
<feature type="sequence variant" id="VAR_078778" description="In NKH; decreased glycine catabolic process; changed localization to the mitochondria; also expressed diffusely throughout the cytosol; decreased abundance; dbSNP:rs1554648117." evidence="10">
    <original>P</original>
    <variation>A</variation>
    <location>
        <position position="267"/>
    </location>
</feature>
<feature type="sequence variant" id="VAR_016849" description="In NKH; dbSNP:rs386833589." evidence="6">
    <original>A</original>
    <variation>P</variation>
    <location>
        <position position="283"/>
    </location>
</feature>
<feature type="sequence variant" id="VAR_016850" description="In one non-ketotic hyperglycinemia patient; dbSNP:rs386833593." evidence="6">
    <original>P</original>
    <variation>T</variation>
    <location>
        <position position="329"/>
    </location>
</feature>
<feature type="sequence variant" id="VAR_078779" description="In NKH; decreased glycine catabolic process; decreased abundance; dbSNP:rs10975674." evidence="10">
    <original>R</original>
    <variation>C</variation>
    <location>
        <position position="362"/>
    </location>
</feature>
<feature type="sequence variant" id="VAR_078780" description="In NKH; decreased glycine catabolic process; decreased abundance; dbSNP:rs150171524." evidence="10">
    <original>R</original>
    <variation>W</variation>
    <location>
        <position position="373"/>
    </location>
</feature>
<feature type="sequence variant" id="VAR_078781" description="In NKH; decreased glycine catabolic process; decreased abundance; dbSNP:rs774093619." evidence="10">
    <original>K</original>
    <variation>E</variation>
    <location>
        <position position="376"/>
    </location>
</feature>
<feature type="sequence variant" id="VAR_078782" description="In NKH; decreased glycine catabolic process; changed localization to the mitochondria; also expressed diffusely throughout the cytosol; decreased abundance; dbSNP:rs761957837." evidence="10">
    <original>R</original>
    <variation>W</variation>
    <location>
        <position position="461"/>
    </location>
</feature>
<feature type="sequence variant" id="VAR_016851" description="In NKH; dbSNP:rs121964976." evidence="5">
    <original>R</original>
    <variation>S</variation>
    <location>
        <position position="515"/>
    </location>
</feature>
<feature type="sequence variant" id="VAR_078783" description="In NKH; decreased GCS P-protein glycine exchange activity; no effect on abundance." evidence="10">
    <original>L</original>
    <variation>P</variation>
    <location>
        <position position="548"/>
    </location>
</feature>
<feature type="sequence variant" id="VAR_004979" description="In NKH; common mutation in Finland; dbSNP:rs121964974." evidence="7">
    <original>S</original>
    <variation>I</variation>
    <location>
        <position position="564"/>
    </location>
</feature>
<feature type="sequence variant" id="VAR_078784" description="In NKH; loss of glycine catabolic process; loss of expression." evidence="10">
    <original>H</original>
    <variation>Y</variation>
    <location>
        <position position="580"/>
    </location>
</feature>
<feature type="sequence variant" id="VAR_078785" description="In NKH; loss of glycine catabolic process; decreased abundance; dbSNP:rs772871471." evidence="10">
    <original>P</original>
    <variation>R</variation>
    <location>
        <position position="581"/>
    </location>
</feature>
<feature type="sequence variant" id="VAR_078786" description="In NKH; loss of GCS P-protein glycine exchange activity; no effect on abundance." evidence="10">
    <original>A</original>
    <variation>D</variation>
    <location>
        <position position="624"/>
    </location>
</feature>
<feature type="sequence variant" id="VAR_009939" description="In NKH." evidence="9">
    <location>
        <position position="756"/>
    </location>
</feature>
<feature type="sequence variant" id="VAR_078787" description="In NKH; loss of GCS P-protein glycine exchange activity; no effect on abundance; dbSNP:rs1374110692." evidence="10">
    <original>G</original>
    <variation>D</variation>
    <location>
        <position position="763"/>
    </location>
</feature>
<feature type="sequence variant" id="VAR_078788" description="In NKH; loss of GCS P-protein glycine exchange activity; no effect on abundance." evidence="10">
    <original>G</original>
    <variation>E</variation>
    <location>
        <position position="768"/>
    </location>
</feature>
<feature type="sequence variant" id="VAR_078789" description="In NKH; decreased glycine catabolic process; decreased abundance; dbSNP:rs386833556." evidence="10">
    <original>R</original>
    <variation>W</variation>
    <location>
        <position position="790"/>
    </location>
</feature>
<feature type="sequence variant" id="VAR_079313" description="In NKH; dbSNP:rs1817497974." evidence="11">
    <original>Y</original>
    <variation>C</variation>
    <location>
        <position position="839"/>
    </location>
</feature>
<feature type="sequence variant" id="VAR_078790" description="In NKH; decreased glycine catabolic process; decreased abundance; dbSNP:rs2129663304." evidence="10">
    <original>D</original>
    <variation>H</variation>
    <location>
        <position position="866"/>
    </location>
</feature>
<feature type="sequence variant" id="VAR_078791" description="In NKH; decreased GCS P-protein glycine exchange activity; no effect on abundance; dbSNP:rs188269735." evidence="10">
    <original>V</original>
    <variation>G</variation>
    <location>
        <position position="905"/>
    </location>
</feature>
<feature type="sequence variant" id="VAR_078792" description="In NKH; decreased glycine catabolic process; decreased abundance; dbSNP:rs758029533." evidence="10">
    <original>I</original>
    <variation>T</variation>
    <location>
        <position position="933"/>
    </location>
</feature>
<feature type="sequence variant" id="VAR_078793" description="In NKH; loss of glycine catabolic process; loss of expression; dbSNP:rs1406713104." evidence="10">
    <original>G</original>
    <variation>R</variation>
    <location>
        <position position="994"/>
    </location>
</feature>
<feature type="sequence conflict" description="In Ref. 2; AAA36463/BAA14286." evidence="15" ref="2">
    <original>A</original>
    <variation>R</variation>
    <location>
        <position position="396"/>
    </location>
</feature>
<feature type="sequence conflict" description="In Ref. 1; AAA36478 and 2; AAA36463/BAA14286." evidence="15" ref="1 2">
    <original>Q</original>
    <variation>H</variation>
    <location>
        <position position="441"/>
    </location>
</feature>
<feature type="sequence conflict" description="In Ref. 1; AAA36478." evidence="15" ref="1">
    <original>Y</original>
    <variation>H</variation>
    <location>
        <position position="608"/>
    </location>
</feature>
<feature type="sequence conflict" description="In Ref. 2; AAA36463/BAA14286." evidence="15" ref="2">
    <original>V</original>
    <variation>M</variation>
    <location>
        <position position="976"/>
    </location>
</feature>
<feature type="helix" evidence="18">
    <location>
        <begin position="52"/>
        <end position="56"/>
    </location>
</feature>
<feature type="helix" evidence="18">
    <location>
        <begin position="64"/>
        <end position="67"/>
    </location>
</feature>
<feature type="helix" evidence="18">
    <location>
        <begin position="72"/>
        <end position="81"/>
    </location>
</feature>
<feature type="helix" evidence="18">
    <location>
        <begin position="87"/>
        <end position="94"/>
    </location>
</feature>
<feature type="helix" evidence="18">
    <location>
        <begin position="97"/>
        <end position="99"/>
    </location>
</feature>
<feature type="helix" evidence="18">
    <location>
        <begin position="113"/>
        <end position="124"/>
    </location>
</feature>
<feature type="helix" evidence="18">
    <location>
        <begin position="145"/>
        <end position="150"/>
    </location>
</feature>
<feature type="turn" evidence="18">
    <location>
        <begin position="151"/>
        <end position="153"/>
    </location>
</feature>
<feature type="helix" evidence="18">
    <location>
        <begin position="155"/>
        <end position="158"/>
    </location>
</feature>
<feature type="helix" evidence="18">
    <location>
        <begin position="166"/>
        <end position="168"/>
    </location>
</feature>
<feature type="helix" evidence="18">
    <location>
        <begin position="170"/>
        <end position="187"/>
    </location>
</feature>
<feature type="strand" evidence="18">
    <location>
        <begin position="190"/>
        <end position="192"/>
    </location>
</feature>
<feature type="helix" evidence="18">
    <location>
        <begin position="199"/>
        <end position="214"/>
    </location>
</feature>
<feature type="strand" evidence="18">
    <location>
        <begin position="217"/>
        <end position="221"/>
    </location>
</feature>
<feature type="helix" evidence="18">
    <location>
        <begin position="227"/>
        <end position="240"/>
    </location>
</feature>
<feature type="strand" evidence="18">
    <location>
        <begin position="243"/>
        <end position="246"/>
    </location>
</feature>
<feature type="helix" evidence="18">
    <location>
        <begin position="249"/>
        <end position="251"/>
    </location>
</feature>
<feature type="strand" evidence="18">
    <location>
        <begin position="259"/>
        <end position="267"/>
    </location>
</feature>
<feature type="helix" evidence="18">
    <location>
        <begin position="277"/>
        <end position="285"/>
    </location>
</feature>
<feature type="strand" evidence="18">
    <location>
        <begin position="289"/>
        <end position="294"/>
    </location>
</feature>
<feature type="helix" evidence="18">
    <location>
        <begin position="298"/>
        <end position="300"/>
    </location>
</feature>
<feature type="helix" evidence="18">
    <location>
        <begin position="305"/>
        <end position="308"/>
    </location>
</feature>
<feature type="strand" evidence="18">
    <location>
        <begin position="311"/>
        <end position="316"/>
    </location>
</feature>
<feature type="turn" evidence="18">
    <location>
        <begin position="318"/>
        <end position="321"/>
    </location>
</feature>
<feature type="helix" evidence="18">
    <location>
        <begin position="325"/>
        <end position="327"/>
    </location>
</feature>
<feature type="strand" evidence="18">
    <location>
        <begin position="332"/>
        <end position="336"/>
    </location>
</feature>
<feature type="helix" evidence="18">
    <location>
        <begin position="338"/>
        <end position="343"/>
    </location>
</feature>
<feature type="strand" evidence="18">
    <location>
        <begin position="349"/>
        <end position="354"/>
    </location>
</feature>
<feature type="strand" evidence="18">
    <location>
        <begin position="359"/>
        <end position="363"/>
    </location>
</feature>
<feature type="helix" evidence="18">
    <location>
        <begin position="366"/>
        <end position="368"/>
    </location>
</feature>
<feature type="helix" evidence="18">
    <location>
        <begin position="370"/>
        <end position="373"/>
    </location>
</feature>
<feature type="helix" evidence="18">
    <location>
        <begin position="374"/>
        <end position="376"/>
    </location>
</feature>
<feature type="helix" evidence="18">
    <location>
        <begin position="386"/>
        <end position="424"/>
    </location>
</feature>
<feature type="strand" evidence="18">
    <location>
        <begin position="428"/>
        <end position="430"/>
    </location>
</feature>
<feature type="strand" evidence="18">
    <location>
        <begin position="432"/>
        <end position="441"/>
    </location>
</feature>
<feature type="helix" evidence="18">
    <location>
        <begin position="446"/>
        <end position="455"/>
    </location>
</feature>
<feature type="strand" evidence="18">
    <location>
        <begin position="468"/>
        <end position="471"/>
    </location>
</feature>
<feature type="helix" evidence="18">
    <location>
        <begin position="478"/>
        <end position="487"/>
    </location>
</feature>
<feature type="helix" evidence="18">
    <location>
        <begin position="494"/>
        <end position="500"/>
    </location>
</feature>
<feature type="helix" evidence="18">
    <location>
        <begin position="508"/>
        <end position="510"/>
    </location>
</feature>
<feature type="helix" evidence="18">
    <location>
        <begin position="523"/>
        <end position="526"/>
    </location>
</feature>
<feature type="helix" evidence="18">
    <location>
        <begin position="531"/>
        <end position="543"/>
    </location>
</feature>
<feature type="turn" evidence="18">
    <location>
        <begin position="548"/>
        <end position="550"/>
    </location>
</feature>
<feature type="turn" evidence="18">
    <location>
        <begin position="556"/>
        <end position="558"/>
    </location>
</feature>
<feature type="helix" evidence="18">
    <location>
        <begin position="565"/>
        <end position="568"/>
    </location>
</feature>
<feature type="helix" evidence="18">
    <location>
        <begin position="569"/>
        <end position="572"/>
    </location>
</feature>
<feature type="helix" evidence="18">
    <location>
        <begin position="574"/>
        <end position="577"/>
    </location>
</feature>
<feature type="helix" evidence="18">
    <location>
        <begin position="585"/>
        <end position="587"/>
    </location>
</feature>
<feature type="helix" evidence="18">
    <location>
        <begin position="589"/>
        <end position="606"/>
    </location>
</feature>
<feature type="strand" evidence="18">
    <location>
        <begin position="609"/>
        <end position="612"/>
    </location>
</feature>
<feature type="helix" evidence="18">
    <location>
        <begin position="618"/>
        <end position="635"/>
    </location>
</feature>
<feature type="strand" evidence="18">
    <location>
        <begin position="643"/>
        <end position="647"/>
    </location>
</feature>
<feature type="helix" evidence="18">
    <location>
        <begin position="653"/>
        <end position="660"/>
    </location>
</feature>
<feature type="strand" evidence="18">
    <location>
        <begin position="664"/>
        <end position="668"/>
    </location>
</feature>
<feature type="strand" evidence="18">
    <location>
        <begin position="674"/>
        <end position="676"/>
    </location>
</feature>
<feature type="helix" evidence="18">
    <location>
        <begin position="678"/>
        <end position="688"/>
    </location>
</feature>
<feature type="turn" evidence="18">
    <location>
        <begin position="689"/>
        <end position="691"/>
    </location>
</feature>
<feature type="strand" evidence="18">
    <location>
        <begin position="692"/>
        <end position="700"/>
    </location>
</feature>
<feature type="helix" evidence="18">
    <location>
        <begin position="710"/>
        <end position="718"/>
    </location>
</feature>
<feature type="turn" evidence="18">
    <location>
        <begin position="719"/>
        <end position="721"/>
    </location>
</feature>
<feature type="strand" evidence="18">
    <location>
        <begin position="723"/>
        <end position="727"/>
    </location>
</feature>
<feature type="helix" evidence="18">
    <location>
        <begin position="728"/>
        <end position="733"/>
    </location>
</feature>
<feature type="turn" evidence="18">
    <location>
        <begin position="734"/>
        <end position="737"/>
    </location>
</feature>
<feature type="helix" evidence="18">
    <location>
        <begin position="740"/>
        <end position="742"/>
    </location>
</feature>
<feature type="strand" evidence="18">
    <location>
        <begin position="746"/>
        <end position="749"/>
    </location>
</feature>
<feature type="helix" evidence="18">
    <location>
        <begin position="752"/>
        <end position="755"/>
    </location>
</feature>
<feature type="turn" evidence="18">
    <location>
        <begin position="761"/>
        <end position="763"/>
    </location>
</feature>
<feature type="strand" evidence="18">
    <location>
        <begin position="770"/>
        <end position="772"/>
    </location>
</feature>
<feature type="helix" evidence="18">
    <location>
        <begin position="774"/>
        <end position="779"/>
    </location>
</feature>
<feature type="strand" evidence="18">
    <location>
        <begin position="784"/>
        <end position="786"/>
    </location>
</feature>
<feature type="strand" evidence="17">
    <location>
        <begin position="791"/>
        <end position="793"/>
    </location>
</feature>
<feature type="strand" evidence="18">
    <location>
        <begin position="801"/>
        <end position="803"/>
    </location>
</feature>
<feature type="helix" evidence="18">
    <location>
        <begin position="808"/>
        <end position="810"/>
    </location>
</feature>
<feature type="helix" evidence="18">
    <location>
        <begin position="811"/>
        <end position="844"/>
    </location>
</feature>
<feature type="turn" evidence="18">
    <location>
        <begin position="845"/>
        <end position="847"/>
    </location>
</feature>
<feature type="strand" evidence="18">
    <location>
        <begin position="848"/>
        <end position="850"/>
    </location>
</feature>
<feature type="strand" evidence="18">
    <location>
        <begin position="863"/>
        <end position="866"/>
    </location>
</feature>
<feature type="helix" evidence="18">
    <location>
        <begin position="869"/>
        <end position="874"/>
    </location>
</feature>
<feature type="helix" evidence="18">
    <location>
        <begin position="878"/>
        <end position="887"/>
    </location>
</feature>
<feature type="strand" evidence="18">
    <location>
        <begin position="893"/>
        <end position="896"/>
    </location>
</feature>
<feature type="strand" evidence="18">
    <location>
        <begin position="903"/>
        <end position="905"/>
    </location>
</feature>
<feature type="helix" evidence="18">
    <location>
        <begin position="913"/>
        <end position="934"/>
    </location>
</feature>
<feature type="strand" evidence="18">
    <location>
        <begin position="940"/>
        <end position="943"/>
    </location>
</feature>
<feature type="helix" evidence="18">
    <location>
        <begin position="944"/>
        <end position="947"/>
    </location>
</feature>
<feature type="helix" evidence="18">
    <location>
        <begin position="952"/>
        <end position="956"/>
    </location>
</feature>
<feature type="helix" evidence="18">
    <location>
        <begin position="966"/>
        <end position="970"/>
    </location>
</feature>
<feature type="helix" evidence="18">
    <location>
        <begin position="978"/>
        <end position="980"/>
    </location>
</feature>
<feature type="strand" evidence="18">
    <location>
        <begin position="985"/>
        <end position="987"/>
    </location>
</feature>
<feature type="helix" evidence="18">
    <location>
        <begin position="991"/>
        <end position="996"/>
    </location>
</feature>
<sequence length="1020" mass="112730">MQSCARAWGLRLGRGVGGGRRLAGGSGPCWAPRSRDSSSGGGDSAAAGASRLLERLLPRHDDFARRHIGPGDKDQREMLQTLGLASIDELIEKTVPANIRLKRPLKMEDPVCENEILATLHAISSKNQIWRSYIGMGYYNCSVPQTILRNLLENSGWITQYTPYQPEVSQGRLESLLNYQTMVCDITGLDMANASLLDEGTAAAEALQLCYRHNKRRKFLVDPRCHPQTIAVVQTRAKYTGVLTELKLPCEMDFSGKDVSGVLFQYPDTEGKVEDFTELVERAHQSGSLACCATDLLALCILRPPGEFGVDIALGSSQRFGVPLGYGGPHAAFFAVRESLVRMMPGRMVGVTRDATGKEVYRLALQTREQHIRRDKATSNICTAQALLANMAAMFAIYHGSHGLEHIARRVHNATLILSEGLKRAGHQLQHDLFFDTLKIQCGCSVKEVLGRAAQRQINFRLFEDGTLGISLDETVNEKDLDDLLWIFGCESSAELVAESMGEECRGIPGSVFKRTSPFLTHQVFNSYHSETNIVRYMKKLENKDISLVHSMIPLGSCTMKLNSSSELAPITWKEFANIHPFVPLDQAQGYQQLFRELEKDLCELTGYDQVCFQPNSGAQGEYAGLATIRAYLNQKGEGHRTVCLIPKSAHGTNPASAHMAGMKIQPVEVDKYGNIDAVHLKAMVDKHKENLAAIMITYPSTNGVFEENISDVCDLIHQHGGQVYLDGANMNAQVGICRPGDFGSDVSHLNLHKTFCIPHGGGGPGMGPIGVKKHLAPFLPNHPVISLKRNEDACPVGTVSAAPWGSSSILPISWAYIKMMGGKGLKQATETAILNANYMAKRLETHYRILFRGARGYVGHEFILDTRPFKKSANIEAVDVAKRLQDYGFHAPTMSWPVAGTLMVEPTESEDKAELDRFCDAMISIRQEIADIEEGRIDPRVNPLKMSPHSLTCVTSSHWDRPYSREVAAFPLPFVKPENKFWPTIARIDDIYGDQHLVCTCPPMEVYESPFSEQKRASS</sequence>
<organism>
    <name type="scientific">Homo sapiens</name>
    <name type="common">Human</name>
    <dbReference type="NCBI Taxonomy" id="9606"/>
    <lineage>
        <taxon>Eukaryota</taxon>
        <taxon>Metazoa</taxon>
        <taxon>Chordata</taxon>
        <taxon>Craniata</taxon>
        <taxon>Vertebrata</taxon>
        <taxon>Euteleostomi</taxon>
        <taxon>Mammalia</taxon>
        <taxon>Eutheria</taxon>
        <taxon>Euarchontoglires</taxon>
        <taxon>Primates</taxon>
        <taxon>Haplorrhini</taxon>
        <taxon>Catarrhini</taxon>
        <taxon>Hominidae</taxon>
        <taxon>Homo</taxon>
    </lineage>
</organism>
<gene>
    <name evidence="16" type="primary">GLDC</name>
    <name evidence="16" type="synonym">GCSP</name>
</gene>
<proteinExistence type="evidence at protein level"/>